<reference key="1">
    <citation type="journal article" date="2009" name="J. Bacteriol.">
        <title>Complete genome sequence of the extremophilic Bacillus cereus strain Q1 with industrial applications.</title>
        <authorList>
            <person name="Xiong Z."/>
            <person name="Jiang Y."/>
            <person name="Qi D."/>
            <person name="Lu H."/>
            <person name="Yang F."/>
            <person name="Yang J."/>
            <person name="Chen L."/>
            <person name="Sun L."/>
            <person name="Xu X."/>
            <person name="Xue Y."/>
            <person name="Zhu Y."/>
            <person name="Jin Q."/>
        </authorList>
    </citation>
    <scope>NUCLEOTIDE SEQUENCE [LARGE SCALE GENOMIC DNA]</scope>
    <source>
        <strain>Q1</strain>
    </source>
</reference>
<proteinExistence type="inferred from homology"/>
<evidence type="ECO:0000255" key="1">
    <source>
        <dbReference type="HAMAP-Rule" id="MF_01624"/>
    </source>
</evidence>
<protein>
    <recommendedName>
        <fullName evidence="1">Arsenate reductase</fullName>
        <ecNumber evidence="1">1.20.4.4</ecNumber>
    </recommendedName>
</protein>
<sequence>MENKKTIYFLCTGNSCRSQMAEAWGKQYLGDKWNVYSAGIEAHGVNPNAIKAMNEVNIDITNQTSDIIDANILNRADLVVTLCSHADAVCPSTPPDVHRVHWGFDDPAGKEWSEFQRVRDEIGERIKRFSETGE</sequence>
<name>ARSC_BACCQ</name>
<gene>
    <name evidence="1" type="primary">arsC</name>
    <name type="ordered locus">BCQ_3007</name>
</gene>
<dbReference type="EC" id="1.20.4.4" evidence="1"/>
<dbReference type="EMBL" id="CP000227">
    <property type="protein sequence ID" value="ACM13435.1"/>
    <property type="molecule type" value="Genomic_DNA"/>
</dbReference>
<dbReference type="SMR" id="B9IRF0"/>
<dbReference type="KEGG" id="bcq:BCQ_3007"/>
<dbReference type="HOGENOM" id="CLU_071415_3_2_9"/>
<dbReference type="Proteomes" id="UP000000441">
    <property type="component" value="Chromosome"/>
</dbReference>
<dbReference type="GO" id="GO:0005737">
    <property type="term" value="C:cytoplasm"/>
    <property type="evidence" value="ECO:0007669"/>
    <property type="project" value="UniProtKB-SubCell"/>
</dbReference>
<dbReference type="GO" id="GO:0030612">
    <property type="term" value="F:arsenate reductase (thioredoxin) activity"/>
    <property type="evidence" value="ECO:0007669"/>
    <property type="project" value="UniProtKB-UniRule"/>
</dbReference>
<dbReference type="GO" id="GO:0004725">
    <property type="term" value="F:protein tyrosine phosphatase activity"/>
    <property type="evidence" value="ECO:0007669"/>
    <property type="project" value="InterPro"/>
</dbReference>
<dbReference type="GO" id="GO:0046685">
    <property type="term" value="P:response to arsenic-containing substance"/>
    <property type="evidence" value="ECO:0007669"/>
    <property type="project" value="UniProtKB-KW"/>
</dbReference>
<dbReference type="CDD" id="cd16345">
    <property type="entry name" value="LMWP_ArsC"/>
    <property type="match status" value="1"/>
</dbReference>
<dbReference type="FunFam" id="3.40.50.2300:FF:000237">
    <property type="entry name" value="Arsenate reductase"/>
    <property type="match status" value="1"/>
</dbReference>
<dbReference type="Gene3D" id="3.40.50.2300">
    <property type="match status" value="1"/>
</dbReference>
<dbReference type="HAMAP" id="MF_01624">
    <property type="entry name" value="Arsenate_reduct"/>
    <property type="match status" value="1"/>
</dbReference>
<dbReference type="InterPro" id="IPR014064">
    <property type="entry name" value="Arsenate_reductase_ArsC"/>
</dbReference>
<dbReference type="InterPro" id="IPR023485">
    <property type="entry name" value="Ptyr_pPase"/>
</dbReference>
<dbReference type="InterPro" id="IPR036196">
    <property type="entry name" value="Ptyr_pPase_sf"/>
</dbReference>
<dbReference type="NCBIfam" id="TIGR02691">
    <property type="entry name" value="arsC_pI258_fam"/>
    <property type="match status" value="1"/>
</dbReference>
<dbReference type="NCBIfam" id="NF010053">
    <property type="entry name" value="PRK13530.1"/>
    <property type="match status" value="1"/>
</dbReference>
<dbReference type="PANTHER" id="PTHR43428">
    <property type="entry name" value="ARSENATE REDUCTASE"/>
    <property type="match status" value="1"/>
</dbReference>
<dbReference type="PANTHER" id="PTHR43428:SF1">
    <property type="entry name" value="ARSENATE REDUCTASE"/>
    <property type="match status" value="1"/>
</dbReference>
<dbReference type="Pfam" id="PF01451">
    <property type="entry name" value="LMWPc"/>
    <property type="match status" value="1"/>
</dbReference>
<dbReference type="SMART" id="SM00226">
    <property type="entry name" value="LMWPc"/>
    <property type="match status" value="1"/>
</dbReference>
<dbReference type="SUPFAM" id="SSF52788">
    <property type="entry name" value="Phosphotyrosine protein phosphatases I"/>
    <property type="match status" value="1"/>
</dbReference>
<comment type="function">
    <text evidence="1">Catalyzes the reduction of arsenate [As(V)] to arsenite [As(III)].</text>
</comment>
<comment type="catalytic activity">
    <reaction evidence="1">
        <text>arsenate + [thioredoxin]-dithiol + H(+) = arsenite + [thioredoxin]-disulfide + H2O</text>
        <dbReference type="Rhea" id="RHEA:43848"/>
        <dbReference type="Rhea" id="RHEA-COMP:10698"/>
        <dbReference type="Rhea" id="RHEA-COMP:10700"/>
        <dbReference type="ChEBI" id="CHEBI:15377"/>
        <dbReference type="ChEBI" id="CHEBI:15378"/>
        <dbReference type="ChEBI" id="CHEBI:29242"/>
        <dbReference type="ChEBI" id="CHEBI:29950"/>
        <dbReference type="ChEBI" id="CHEBI:48597"/>
        <dbReference type="ChEBI" id="CHEBI:50058"/>
        <dbReference type="EC" id="1.20.4.4"/>
    </reaction>
</comment>
<comment type="subcellular location">
    <subcellularLocation>
        <location evidence="1">Cytoplasm</location>
    </subcellularLocation>
</comment>
<comment type="similarity">
    <text evidence="1">Belongs to the low molecular weight phosphotyrosine protein phosphatase family. Thioredoxin-coupled ArsC subfamily.</text>
</comment>
<accession>B9IRF0</accession>
<organism>
    <name type="scientific">Bacillus cereus (strain Q1)</name>
    <dbReference type="NCBI Taxonomy" id="361100"/>
    <lineage>
        <taxon>Bacteria</taxon>
        <taxon>Bacillati</taxon>
        <taxon>Bacillota</taxon>
        <taxon>Bacilli</taxon>
        <taxon>Bacillales</taxon>
        <taxon>Bacillaceae</taxon>
        <taxon>Bacillus</taxon>
        <taxon>Bacillus cereus group</taxon>
    </lineage>
</organism>
<feature type="chain" id="PRO_1000186118" description="Arsenate reductase">
    <location>
        <begin position="1"/>
        <end position="134"/>
    </location>
</feature>
<feature type="active site" description="Nucleophile" evidence="1">
    <location>
        <position position="11"/>
    </location>
</feature>
<feature type="active site" description="Nucleophile" evidence="1">
    <location>
        <position position="83"/>
    </location>
</feature>
<feature type="active site" description="Nucleophile" evidence="1">
    <location>
        <position position="90"/>
    </location>
</feature>
<feature type="disulfide bond" description="Redox-active; alternate" evidence="1">
    <location>
        <begin position="11"/>
        <end position="83"/>
    </location>
</feature>
<feature type="disulfide bond" description="Redox-active; alternate" evidence="1">
    <location>
        <begin position="83"/>
        <end position="90"/>
    </location>
</feature>
<keyword id="KW-0059">Arsenical resistance</keyword>
<keyword id="KW-0963">Cytoplasm</keyword>
<keyword id="KW-1015">Disulfide bond</keyword>
<keyword id="KW-0560">Oxidoreductase</keyword>
<keyword id="KW-0676">Redox-active center</keyword>